<evidence type="ECO:0000255" key="1">
    <source>
        <dbReference type="HAMAP-Rule" id="MF_00175"/>
    </source>
</evidence>
<evidence type="ECO:0000255" key="2">
    <source>
        <dbReference type="PROSITE-ProRule" id="PRU01250"/>
    </source>
</evidence>
<gene>
    <name evidence="1" type="primary">clpX</name>
    <name type="ordered locus">Dgeo_2152</name>
</gene>
<reference key="1">
    <citation type="submission" date="2006-04" db="EMBL/GenBank/DDBJ databases">
        <title>Complete sequence of chromosome of Deinococcus geothermalis DSM 11300.</title>
        <authorList>
            <person name="Copeland A."/>
            <person name="Lucas S."/>
            <person name="Lapidus A."/>
            <person name="Barry K."/>
            <person name="Detter J.C."/>
            <person name="Glavina del Rio T."/>
            <person name="Hammon N."/>
            <person name="Israni S."/>
            <person name="Dalin E."/>
            <person name="Tice H."/>
            <person name="Pitluck S."/>
            <person name="Brettin T."/>
            <person name="Bruce D."/>
            <person name="Han C."/>
            <person name="Tapia R."/>
            <person name="Saunders E."/>
            <person name="Gilna P."/>
            <person name="Schmutz J."/>
            <person name="Larimer F."/>
            <person name="Land M."/>
            <person name="Hauser L."/>
            <person name="Kyrpides N."/>
            <person name="Kim E."/>
            <person name="Daly M.J."/>
            <person name="Fredrickson J.K."/>
            <person name="Makarova K.S."/>
            <person name="Gaidamakova E.K."/>
            <person name="Zhai M."/>
            <person name="Richardson P."/>
        </authorList>
    </citation>
    <scope>NUCLEOTIDE SEQUENCE [LARGE SCALE GENOMIC DNA]</scope>
    <source>
        <strain>DSM 11300 / CIP 105573 / AG-3a</strain>
    </source>
</reference>
<dbReference type="EMBL" id="CP000359">
    <property type="protein sequence ID" value="ABF46446.1"/>
    <property type="molecule type" value="Genomic_DNA"/>
</dbReference>
<dbReference type="RefSeq" id="WP_011531271.1">
    <property type="nucleotide sequence ID" value="NC_008025.1"/>
</dbReference>
<dbReference type="SMR" id="Q1IWD8"/>
<dbReference type="STRING" id="319795.Dgeo_2152"/>
<dbReference type="KEGG" id="dge:Dgeo_2152"/>
<dbReference type="eggNOG" id="COG1219">
    <property type="taxonomic scope" value="Bacteria"/>
</dbReference>
<dbReference type="HOGENOM" id="CLU_014218_8_2_0"/>
<dbReference type="Proteomes" id="UP000002431">
    <property type="component" value="Chromosome"/>
</dbReference>
<dbReference type="GO" id="GO:0009376">
    <property type="term" value="C:HslUV protease complex"/>
    <property type="evidence" value="ECO:0007669"/>
    <property type="project" value="TreeGrafter"/>
</dbReference>
<dbReference type="GO" id="GO:0005524">
    <property type="term" value="F:ATP binding"/>
    <property type="evidence" value="ECO:0007669"/>
    <property type="project" value="UniProtKB-UniRule"/>
</dbReference>
<dbReference type="GO" id="GO:0016887">
    <property type="term" value="F:ATP hydrolysis activity"/>
    <property type="evidence" value="ECO:0007669"/>
    <property type="project" value="InterPro"/>
</dbReference>
<dbReference type="GO" id="GO:0140662">
    <property type="term" value="F:ATP-dependent protein folding chaperone"/>
    <property type="evidence" value="ECO:0007669"/>
    <property type="project" value="InterPro"/>
</dbReference>
<dbReference type="GO" id="GO:0046983">
    <property type="term" value="F:protein dimerization activity"/>
    <property type="evidence" value="ECO:0007669"/>
    <property type="project" value="InterPro"/>
</dbReference>
<dbReference type="GO" id="GO:0051082">
    <property type="term" value="F:unfolded protein binding"/>
    <property type="evidence" value="ECO:0007669"/>
    <property type="project" value="UniProtKB-UniRule"/>
</dbReference>
<dbReference type="GO" id="GO:0008270">
    <property type="term" value="F:zinc ion binding"/>
    <property type="evidence" value="ECO:0007669"/>
    <property type="project" value="InterPro"/>
</dbReference>
<dbReference type="GO" id="GO:0051301">
    <property type="term" value="P:cell division"/>
    <property type="evidence" value="ECO:0007669"/>
    <property type="project" value="TreeGrafter"/>
</dbReference>
<dbReference type="GO" id="GO:0051603">
    <property type="term" value="P:proteolysis involved in protein catabolic process"/>
    <property type="evidence" value="ECO:0007669"/>
    <property type="project" value="TreeGrafter"/>
</dbReference>
<dbReference type="CDD" id="cd19497">
    <property type="entry name" value="RecA-like_ClpX"/>
    <property type="match status" value="1"/>
</dbReference>
<dbReference type="FunFam" id="1.10.8.60:FF:000002">
    <property type="entry name" value="ATP-dependent Clp protease ATP-binding subunit ClpX"/>
    <property type="match status" value="1"/>
</dbReference>
<dbReference type="FunFam" id="3.40.50.300:FF:000005">
    <property type="entry name" value="ATP-dependent Clp protease ATP-binding subunit ClpX"/>
    <property type="match status" value="1"/>
</dbReference>
<dbReference type="Gene3D" id="1.10.8.60">
    <property type="match status" value="1"/>
</dbReference>
<dbReference type="Gene3D" id="6.20.220.10">
    <property type="entry name" value="ClpX chaperone, C4-type zinc finger domain"/>
    <property type="match status" value="1"/>
</dbReference>
<dbReference type="Gene3D" id="3.40.50.300">
    <property type="entry name" value="P-loop containing nucleotide triphosphate hydrolases"/>
    <property type="match status" value="1"/>
</dbReference>
<dbReference type="HAMAP" id="MF_00175">
    <property type="entry name" value="ClpX"/>
    <property type="match status" value="1"/>
</dbReference>
<dbReference type="InterPro" id="IPR003593">
    <property type="entry name" value="AAA+_ATPase"/>
</dbReference>
<dbReference type="InterPro" id="IPR050052">
    <property type="entry name" value="ATP-dep_Clp_protease_ClpX"/>
</dbReference>
<dbReference type="InterPro" id="IPR003959">
    <property type="entry name" value="ATPase_AAA_core"/>
</dbReference>
<dbReference type="InterPro" id="IPR019489">
    <property type="entry name" value="Clp_ATPase_C"/>
</dbReference>
<dbReference type="InterPro" id="IPR004487">
    <property type="entry name" value="Clp_protease_ATP-bd_su_ClpX"/>
</dbReference>
<dbReference type="InterPro" id="IPR046425">
    <property type="entry name" value="ClpX_bact"/>
</dbReference>
<dbReference type="InterPro" id="IPR027417">
    <property type="entry name" value="P-loop_NTPase"/>
</dbReference>
<dbReference type="InterPro" id="IPR010603">
    <property type="entry name" value="Znf_CppX_C4"/>
</dbReference>
<dbReference type="InterPro" id="IPR038366">
    <property type="entry name" value="Znf_CppX_C4_sf"/>
</dbReference>
<dbReference type="NCBIfam" id="TIGR00382">
    <property type="entry name" value="clpX"/>
    <property type="match status" value="1"/>
</dbReference>
<dbReference type="NCBIfam" id="NF003745">
    <property type="entry name" value="PRK05342.1"/>
    <property type="match status" value="1"/>
</dbReference>
<dbReference type="PANTHER" id="PTHR48102:SF7">
    <property type="entry name" value="ATP-DEPENDENT CLP PROTEASE ATP-BINDING SUBUNIT CLPX-LIKE, MITOCHONDRIAL"/>
    <property type="match status" value="1"/>
</dbReference>
<dbReference type="PANTHER" id="PTHR48102">
    <property type="entry name" value="ATP-DEPENDENT CLP PROTEASE ATP-BINDING SUBUNIT CLPX-LIKE, MITOCHONDRIAL-RELATED"/>
    <property type="match status" value="1"/>
</dbReference>
<dbReference type="Pfam" id="PF07724">
    <property type="entry name" value="AAA_2"/>
    <property type="match status" value="1"/>
</dbReference>
<dbReference type="Pfam" id="PF10431">
    <property type="entry name" value="ClpB_D2-small"/>
    <property type="match status" value="1"/>
</dbReference>
<dbReference type="Pfam" id="PF06689">
    <property type="entry name" value="zf-C4_ClpX"/>
    <property type="match status" value="1"/>
</dbReference>
<dbReference type="SMART" id="SM00382">
    <property type="entry name" value="AAA"/>
    <property type="match status" value="1"/>
</dbReference>
<dbReference type="SMART" id="SM01086">
    <property type="entry name" value="ClpB_D2-small"/>
    <property type="match status" value="1"/>
</dbReference>
<dbReference type="SMART" id="SM00994">
    <property type="entry name" value="zf-C4_ClpX"/>
    <property type="match status" value="1"/>
</dbReference>
<dbReference type="SUPFAM" id="SSF57716">
    <property type="entry name" value="Glucocorticoid receptor-like (DNA-binding domain)"/>
    <property type="match status" value="1"/>
</dbReference>
<dbReference type="SUPFAM" id="SSF52540">
    <property type="entry name" value="P-loop containing nucleoside triphosphate hydrolases"/>
    <property type="match status" value="1"/>
</dbReference>
<dbReference type="PROSITE" id="PS51902">
    <property type="entry name" value="CLPX_ZB"/>
    <property type="match status" value="1"/>
</dbReference>
<proteinExistence type="inferred from homology"/>
<feature type="chain" id="PRO_1000058336" description="ATP-dependent Clp protease ATP-binding subunit ClpX">
    <location>
        <begin position="1"/>
        <end position="406"/>
    </location>
</feature>
<feature type="domain" description="ClpX-type ZB" evidence="2">
    <location>
        <begin position="1"/>
        <end position="56"/>
    </location>
</feature>
<feature type="binding site" evidence="2">
    <location>
        <position position="13"/>
    </location>
    <ligand>
        <name>Zn(2+)</name>
        <dbReference type="ChEBI" id="CHEBI:29105"/>
    </ligand>
</feature>
<feature type="binding site" evidence="2">
    <location>
        <position position="16"/>
    </location>
    <ligand>
        <name>Zn(2+)</name>
        <dbReference type="ChEBI" id="CHEBI:29105"/>
    </ligand>
</feature>
<feature type="binding site" evidence="2">
    <location>
        <position position="37"/>
    </location>
    <ligand>
        <name>Zn(2+)</name>
        <dbReference type="ChEBI" id="CHEBI:29105"/>
    </ligand>
</feature>
<feature type="binding site" evidence="2">
    <location>
        <position position="40"/>
    </location>
    <ligand>
        <name>Zn(2+)</name>
        <dbReference type="ChEBI" id="CHEBI:29105"/>
    </ligand>
</feature>
<feature type="binding site" evidence="1">
    <location>
        <begin position="115"/>
        <end position="122"/>
    </location>
    <ligand>
        <name>ATP</name>
        <dbReference type="ChEBI" id="CHEBI:30616"/>
    </ligand>
</feature>
<comment type="function">
    <text evidence="1">ATP-dependent specificity component of the Clp protease. It directs the protease to specific substrates. Can perform chaperone functions in the absence of ClpP.</text>
</comment>
<comment type="subunit">
    <text evidence="1">Component of the ClpX-ClpP complex. Forms a hexameric ring that, in the presence of ATP, binds to fourteen ClpP subunits assembled into a disk-like structure with a central cavity, resembling the structure of eukaryotic proteasomes.</text>
</comment>
<comment type="similarity">
    <text evidence="1">Belongs to the ClpX chaperone family.</text>
</comment>
<sequence>MTGRSGNIGGDRCSFCGRQHPQIAQLIEAPGRAAFICNECTDRAFELVRQNKAKGSEFRLEELPSPKEIKAYLDEFVIGQDEAKKALAVAVVSHYQRLAHPDVNLQKSNILLIGPTGTGKTLLAQSLAEMLEVPFAIADATTLTEAGYVGDDVENVIVRLLQAAEYDVAAAERGIIYIDEIDKIARKSEGTSITRDVSGEGVQQALLKIIEGTVAQVPPQGGRKHPQQELVQVNTKNILFIVGGAFENMAEIARARTNVRSVGFGAEHKGEEKEELRFLPEDLVKFGLIPEFVGRLPLVVQLQDLDEDALVRILTEPQGAIVKQYQALFGFQGVDLTFTEEALREVAHRAKARKTGARGLRAVLEKAMTDLLFELPIEGLKELRFDAENIDHPLALIESGGLKKSA</sequence>
<name>CLPX_DEIGD</name>
<organism>
    <name type="scientific">Deinococcus geothermalis (strain DSM 11300 / CIP 105573 / AG-3a)</name>
    <dbReference type="NCBI Taxonomy" id="319795"/>
    <lineage>
        <taxon>Bacteria</taxon>
        <taxon>Thermotogati</taxon>
        <taxon>Deinococcota</taxon>
        <taxon>Deinococci</taxon>
        <taxon>Deinococcales</taxon>
        <taxon>Deinococcaceae</taxon>
        <taxon>Deinococcus</taxon>
    </lineage>
</organism>
<protein>
    <recommendedName>
        <fullName evidence="1">ATP-dependent Clp protease ATP-binding subunit ClpX</fullName>
    </recommendedName>
</protein>
<keyword id="KW-0067">ATP-binding</keyword>
<keyword id="KW-0143">Chaperone</keyword>
<keyword id="KW-0479">Metal-binding</keyword>
<keyword id="KW-0547">Nucleotide-binding</keyword>
<keyword id="KW-0862">Zinc</keyword>
<accession>Q1IWD8</accession>